<protein>
    <recommendedName>
        <fullName>cAMP-dependent protein kinase regulatory subunit</fullName>
        <shortName>PKA regulatory subunit</shortName>
    </recommendedName>
</protein>
<proteinExistence type="inferred from homology"/>
<organism>
    <name type="scientific">Hypocrea atroviridis</name>
    <name type="common">Trichoderma atroviride</name>
    <dbReference type="NCBI Taxonomy" id="63577"/>
    <lineage>
        <taxon>Eukaryota</taxon>
        <taxon>Fungi</taxon>
        <taxon>Dikarya</taxon>
        <taxon>Ascomycota</taxon>
        <taxon>Pezizomycotina</taxon>
        <taxon>Sordariomycetes</taxon>
        <taxon>Hypocreomycetidae</taxon>
        <taxon>Hypocreales</taxon>
        <taxon>Hypocreaceae</taxon>
        <taxon>Trichoderma</taxon>
    </lineage>
</organism>
<accession>Q86ZN7</accession>
<feature type="chain" id="PRO_0000205415" description="cAMP-dependent protein kinase regulatory subunit">
    <location>
        <begin position="1"/>
        <end position="462"/>
    </location>
</feature>
<feature type="region of interest" description="Dimerization and phosphorylation" evidence="2">
    <location>
        <begin position="54"/>
        <end position="203"/>
    </location>
</feature>
<feature type="region of interest" description="Disordered" evidence="3">
    <location>
        <begin position="79"/>
        <end position="157"/>
    </location>
</feature>
<feature type="compositionally biased region" description="Low complexity" evidence="3">
    <location>
        <begin position="80"/>
        <end position="102"/>
    </location>
</feature>
<feature type="binding site">
    <location>
        <begin position="204"/>
        <end position="333"/>
    </location>
    <ligand>
        <name>3',5'-cyclic AMP</name>
        <dbReference type="ChEBI" id="CHEBI:58165"/>
        <label>1</label>
    </ligand>
</feature>
<feature type="binding site" evidence="1">
    <location>
        <position position="282"/>
    </location>
    <ligand>
        <name>3',5'-cyclic AMP</name>
        <dbReference type="ChEBI" id="CHEBI:58165"/>
        <label>1</label>
    </ligand>
</feature>
<feature type="binding site" evidence="1">
    <location>
        <position position="291"/>
    </location>
    <ligand>
        <name>3',5'-cyclic AMP</name>
        <dbReference type="ChEBI" id="CHEBI:58165"/>
        <label>1</label>
    </ligand>
</feature>
<feature type="binding site">
    <location>
        <begin position="336"/>
        <end position="453"/>
    </location>
    <ligand>
        <name>3',5'-cyclic AMP</name>
        <dbReference type="ChEBI" id="CHEBI:58165"/>
        <label>2</label>
    </ligand>
</feature>
<feature type="binding site" evidence="1">
    <location>
        <position position="401"/>
    </location>
    <ligand>
        <name>3',5'-cyclic AMP</name>
        <dbReference type="ChEBI" id="CHEBI:58165"/>
        <label>2</label>
    </ligand>
</feature>
<feature type="binding site" evidence="1">
    <location>
        <position position="410"/>
    </location>
    <ligand>
        <name>3',5'-cyclic AMP</name>
        <dbReference type="ChEBI" id="CHEBI:58165"/>
        <label>2</label>
    </ligand>
</feature>
<feature type="modified residue" description="Phosphoserine" evidence="1">
    <location>
        <position position="164"/>
    </location>
</feature>
<comment type="subunit">
    <text evidence="1">Tetramer, composed of 2 regulatory (R) and 2 catalytic (C) subunits. In the presence of cAMP it dissociates into 2 active monomeric C subunits and an R dimer (By similarity).</text>
</comment>
<comment type="similarity">
    <text evidence="4">Belongs to the cAMP-dependent kinase regulatory chain family.</text>
</comment>
<reference key="1">
    <citation type="submission" date="2002-01" db="EMBL/GenBank/DDBJ databases">
        <title>Trichoderma atroviride cAMP-dependent protein kinase regulatory subunit.</title>
        <authorList>
            <person name="Zeilinger S."/>
            <person name="Kubicek C."/>
        </authorList>
    </citation>
    <scope>NUCLEOTIDE SEQUENCE [GENOMIC DNA]</scope>
</reference>
<keyword id="KW-0114">cAMP</keyword>
<keyword id="KW-0116">cAMP-binding</keyword>
<keyword id="KW-0547">Nucleotide-binding</keyword>
<keyword id="KW-0597">Phosphoprotein</keyword>
<keyword id="KW-0677">Repeat</keyword>
<dbReference type="EMBL" id="AF473578">
    <property type="protein sequence ID" value="AAO33461.1"/>
    <property type="molecule type" value="Genomic_DNA"/>
</dbReference>
<dbReference type="SMR" id="Q86ZN7"/>
<dbReference type="OMA" id="SQTRCVG"/>
<dbReference type="GO" id="GO:0005952">
    <property type="term" value="C:cAMP-dependent protein kinase complex"/>
    <property type="evidence" value="ECO:0007669"/>
    <property type="project" value="InterPro"/>
</dbReference>
<dbReference type="GO" id="GO:0005829">
    <property type="term" value="C:cytosol"/>
    <property type="evidence" value="ECO:0007669"/>
    <property type="project" value="TreeGrafter"/>
</dbReference>
<dbReference type="GO" id="GO:0005634">
    <property type="term" value="C:nucleus"/>
    <property type="evidence" value="ECO:0007669"/>
    <property type="project" value="TreeGrafter"/>
</dbReference>
<dbReference type="GO" id="GO:0030552">
    <property type="term" value="F:cAMP binding"/>
    <property type="evidence" value="ECO:0007669"/>
    <property type="project" value="UniProtKB-KW"/>
</dbReference>
<dbReference type="GO" id="GO:0004862">
    <property type="term" value="F:cAMP-dependent protein kinase inhibitor activity"/>
    <property type="evidence" value="ECO:0007669"/>
    <property type="project" value="TreeGrafter"/>
</dbReference>
<dbReference type="GO" id="GO:0034236">
    <property type="term" value="F:protein kinase A catalytic subunit binding"/>
    <property type="evidence" value="ECO:0007669"/>
    <property type="project" value="TreeGrafter"/>
</dbReference>
<dbReference type="CDD" id="cd00038">
    <property type="entry name" value="CAP_ED"/>
    <property type="match status" value="2"/>
</dbReference>
<dbReference type="CDD" id="cd12098">
    <property type="entry name" value="DD_R_ScPKA-like"/>
    <property type="match status" value="1"/>
</dbReference>
<dbReference type="FunFam" id="2.60.120.10:FF:000039">
    <property type="entry name" value="cAMP-dependent protein kinase regulatory subunit"/>
    <property type="match status" value="1"/>
</dbReference>
<dbReference type="FunFam" id="2.60.120.10:FF:000006">
    <property type="entry name" value="cAMP-dependent protein kinase type I-alpha regulatory subunit"/>
    <property type="match status" value="1"/>
</dbReference>
<dbReference type="Gene3D" id="2.60.120.10">
    <property type="entry name" value="Jelly Rolls"/>
    <property type="match status" value="2"/>
</dbReference>
<dbReference type="InterPro" id="IPR050503">
    <property type="entry name" value="cAMP-dep_PK_reg_su-like"/>
</dbReference>
<dbReference type="InterPro" id="IPR012198">
    <property type="entry name" value="cAMP_dep_PK_reg_su"/>
</dbReference>
<dbReference type="InterPro" id="IPR003117">
    <property type="entry name" value="cAMP_dep_PK_reg_su_I/II_a/b"/>
</dbReference>
<dbReference type="InterPro" id="IPR018488">
    <property type="entry name" value="cNMP-bd_CS"/>
</dbReference>
<dbReference type="InterPro" id="IPR000595">
    <property type="entry name" value="cNMP-bd_dom"/>
</dbReference>
<dbReference type="InterPro" id="IPR018490">
    <property type="entry name" value="cNMP-bd_dom_sf"/>
</dbReference>
<dbReference type="InterPro" id="IPR014710">
    <property type="entry name" value="RmlC-like_jellyroll"/>
</dbReference>
<dbReference type="PANTHER" id="PTHR11635">
    <property type="entry name" value="CAMP-DEPENDENT PROTEIN KINASE REGULATORY CHAIN"/>
    <property type="match status" value="1"/>
</dbReference>
<dbReference type="PANTHER" id="PTHR11635:SF152">
    <property type="entry name" value="CAMP-DEPENDENT PROTEIN KINASE TYPE I REGULATORY SUBUNIT-RELATED"/>
    <property type="match status" value="1"/>
</dbReference>
<dbReference type="Pfam" id="PF00027">
    <property type="entry name" value="cNMP_binding"/>
    <property type="match status" value="2"/>
</dbReference>
<dbReference type="Pfam" id="PF02197">
    <property type="entry name" value="RIIa"/>
    <property type="match status" value="1"/>
</dbReference>
<dbReference type="PIRSF" id="PIRSF000548">
    <property type="entry name" value="PK_regulatory"/>
    <property type="match status" value="1"/>
</dbReference>
<dbReference type="PRINTS" id="PR00103">
    <property type="entry name" value="CAMPKINASE"/>
</dbReference>
<dbReference type="SMART" id="SM00100">
    <property type="entry name" value="cNMP"/>
    <property type="match status" value="2"/>
</dbReference>
<dbReference type="SMART" id="SM00394">
    <property type="entry name" value="RIIa"/>
    <property type="match status" value="1"/>
</dbReference>
<dbReference type="SUPFAM" id="SSF51206">
    <property type="entry name" value="cAMP-binding domain-like"/>
    <property type="match status" value="2"/>
</dbReference>
<dbReference type="PROSITE" id="PS00888">
    <property type="entry name" value="CNMP_BINDING_1"/>
    <property type="match status" value="2"/>
</dbReference>
<dbReference type="PROSITE" id="PS00889">
    <property type="entry name" value="CNMP_BINDING_2"/>
    <property type="match status" value="2"/>
</dbReference>
<dbReference type="PROSITE" id="PS50042">
    <property type="entry name" value="CNMP_BINDING_3"/>
    <property type="match status" value="2"/>
</dbReference>
<name>KAPR_HYPAT</name>
<gene>
    <name type="primary">pkar1</name>
</gene>
<evidence type="ECO:0000250" key="1"/>
<evidence type="ECO:0000255" key="2"/>
<evidence type="ECO:0000256" key="3">
    <source>
        <dbReference type="SAM" id="MobiDB-lite"/>
    </source>
</evidence>
<evidence type="ECO:0000305" key="4"/>
<sequence length="462" mass="50151">MSLPEAYQLEIQALNKQVLQTCPSDILQFCADFFNSRLATERAASISLFRDRGTPSPRFPPSPTNPHFGMMSSQFSSPFGANANPFGGSSSNPNPFGGSASPMSSSVMHRVVEEDESDNHLAPGGSLFSGAFGGDASTEAPPTLRAPPTTDSYPAQYNFSRRTSVSAESLKPSADGFDNWTPPYTDKTPEQVERLKYAIEGNFLFSHLDDEQSAQILGALVEKPIPARGIKVISQGDAGDYFYVVERGSFDVYVNDCGFIEPGPDGLGNKVGTIQAGGSFGELALMYNAPRAATIISAEGSCTLWALDRVTFRRILMESTFARRRMYENFLEEVPILSSLTPYERSKISDALETQKFAPGDVIIHEGDPGHSFYLLESGEAAAFKGEEQVLSYKKGDFFGELALLNDAPRAASVIATSDVKVATLGKNAFQRLLGPVEGLLRRTRYLGVKTGVEEMDPLHTQ</sequence>